<feature type="initiator methionine" description="Removed">
    <location>
        <position position="1"/>
    </location>
</feature>
<feature type="chain" id="PRO_0000075942" description="Glycerate dehydrogenase">
    <location>
        <begin position="2"/>
        <end position="322"/>
    </location>
</feature>
<feature type="active site">
    <location>
        <position position="241"/>
    </location>
</feature>
<feature type="active site">
    <location>
        <position position="270"/>
    </location>
</feature>
<feature type="active site" description="Proton donor">
    <location>
        <position position="288"/>
    </location>
</feature>
<feature type="binding site" evidence="1">
    <location>
        <begin position="158"/>
        <end position="159"/>
    </location>
    <ligand>
        <name>NAD(+)</name>
        <dbReference type="ChEBI" id="CHEBI:57540"/>
    </ligand>
</feature>
<feature type="binding site" evidence="1">
    <location>
        <position position="178"/>
    </location>
    <ligand>
        <name>NAD(+)</name>
        <dbReference type="ChEBI" id="CHEBI:57540"/>
    </ligand>
</feature>
<feature type="binding site" evidence="1">
    <location>
        <begin position="239"/>
        <end position="241"/>
    </location>
    <ligand>
        <name>NAD(+)</name>
        <dbReference type="ChEBI" id="CHEBI:57540"/>
    </ligand>
</feature>
<feature type="binding site" evidence="1">
    <location>
        <position position="265"/>
    </location>
    <ligand>
        <name>NAD(+)</name>
        <dbReference type="ChEBI" id="CHEBI:57540"/>
    </ligand>
</feature>
<feature type="binding site" evidence="1">
    <location>
        <begin position="288"/>
        <end position="291"/>
    </location>
    <ligand>
        <name>NAD(+)</name>
        <dbReference type="ChEBI" id="CHEBI:57540"/>
    </ligand>
</feature>
<feature type="strand" evidence="3">
    <location>
        <begin position="5"/>
        <end position="10"/>
    </location>
</feature>
<feature type="helix" evidence="3">
    <location>
        <begin position="14"/>
        <end position="21"/>
    </location>
</feature>
<feature type="strand" evidence="3">
    <location>
        <begin position="24"/>
        <end position="28"/>
    </location>
</feature>
<feature type="helix" evidence="3">
    <location>
        <begin position="37"/>
        <end position="44"/>
    </location>
</feature>
<feature type="strand" evidence="3">
    <location>
        <begin position="48"/>
        <end position="53"/>
    </location>
</feature>
<feature type="helix" evidence="3">
    <location>
        <begin position="60"/>
        <end position="65"/>
    </location>
</feature>
<feature type="strand" evidence="3">
    <location>
        <begin position="72"/>
        <end position="78"/>
    </location>
</feature>
<feature type="helix" evidence="3">
    <location>
        <begin position="85"/>
        <end position="90"/>
    </location>
</feature>
<feature type="strand" evidence="3">
    <location>
        <begin position="94"/>
        <end position="96"/>
    </location>
</feature>
<feature type="helix" evidence="3">
    <location>
        <begin position="103"/>
        <end position="118"/>
    </location>
</feature>
<feature type="helix" evidence="3">
    <location>
        <begin position="121"/>
        <end position="129"/>
    </location>
</feature>
<feature type="turn" evidence="3">
    <location>
        <begin position="138"/>
        <end position="141"/>
    </location>
</feature>
<feature type="strand" evidence="3">
    <location>
        <begin position="150"/>
        <end position="154"/>
    </location>
</feature>
<feature type="helix" evidence="3">
    <location>
        <begin position="158"/>
        <end position="168"/>
    </location>
</feature>
<feature type="turn" evidence="3">
    <location>
        <begin position="169"/>
        <end position="171"/>
    </location>
</feature>
<feature type="strand" evidence="3">
    <location>
        <begin position="173"/>
        <end position="177"/>
    </location>
</feature>
<feature type="helix" evidence="3">
    <location>
        <begin position="184"/>
        <end position="189"/>
    </location>
</feature>
<feature type="helix" evidence="3">
    <location>
        <begin position="198"/>
        <end position="204"/>
    </location>
</feature>
<feature type="strand" evidence="3">
    <location>
        <begin position="206"/>
        <end position="210"/>
    </location>
</feature>
<feature type="turn" evidence="3">
    <location>
        <begin position="216"/>
        <end position="220"/>
    </location>
</feature>
<feature type="helix" evidence="3">
    <location>
        <begin position="224"/>
        <end position="227"/>
    </location>
</feature>
<feature type="strand" evidence="3">
    <location>
        <begin position="234"/>
        <end position="238"/>
    </location>
</feature>
<feature type="helix" evidence="3">
    <location>
        <begin position="242"/>
        <end position="244"/>
    </location>
</feature>
<feature type="helix" evidence="3">
    <location>
        <begin position="247"/>
        <end position="255"/>
    </location>
</feature>
<feature type="strand" evidence="3">
    <location>
        <begin position="258"/>
        <end position="265"/>
    </location>
</feature>
<feature type="turn" evidence="3">
    <location>
        <begin position="268"/>
        <end position="271"/>
    </location>
</feature>
<feature type="helix" evidence="3">
    <location>
        <begin position="277"/>
        <end position="279"/>
    </location>
</feature>
<feature type="strand" evidence="3">
    <location>
        <begin position="283"/>
        <end position="285"/>
    </location>
</feature>
<feature type="helix" evidence="3">
    <location>
        <begin position="294"/>
        <end position="312"/>
    </location>
</feature>
<feature type="strand" evidence="3">
    <location>
        <begin position="320"/>
        <end position="322"/>
    </location>
</feature>
<proteinExistence type="evidence at protein level"/>
<dbReference type="EC" id="1.1.1.29"/>
<dbReference type="PDB" id="1GDH">
    <property type="method" value="X-ray"/>
    <property type="resolution" value="2.40 A"/>
    <property type="chains" value="A/B=3-322"/>
</dbReference>
<dbReference type="PDBsum" id="1GDH"/>
<dbReference type="SMR" id="P36234"/>
<dbReference type="BioCyc" id="MetaCyc:MONOMER-4245"/>
<dbReference type="UniPathway" id="UPA00927"/>
<dbReference type="EvolutionaryTrace" id="P36234"/>
<dbReference type="GO" id="GO:0005829">
    <property type="term" value="C:cytosol"/>
    <property type="evidence" value="ECO:0007669"/>
    <property type="project" value="TreeGrafter"/>
</dbReference>
<dbReference type="GO" id="GO:0030267">
    <property type="term" value="F:glyoxylate reductase (NADPH) activity"/>
    <property type="evidence" value="ECO:0007669"/>
    <property type="project" value="TreeGrafter"/>
</dbReference>
<dbReference type="GO" id="GO:0008465">
    <property type="term" value="F:hydroxypyruvate reductase (NADH) activity"/>
    <property type="evidence" value="ECO:0007669"/>
    <property type="project" value="UniProtKB-EC"/>
</dbReference>
<dbReference type="GO" id="GO:0051287">
    <property type="term" value="F:NAD binding"/>
    <property type="evidence" value="ECO:0007669"/>
    <property type="project" value="InterPro"/>
</dbReference>
<dbReference type="CDD" id="cd05301">
    <property type="entry name" value="GDH"/>
    <property type="match status" value="1"/>
</dbReference>
<dbReference type="Gene3D" id="3.40.50.720">
    <property type="entry name" value="NAD(P)-binding Rossmann-like Domain"/>
    <property type="match status" value="2"/>
</dbReference>
<dbReference type="InterPro" id="IPR050223">
    <property type="entry name" value="D-isomer_2-hydroxyacid_DH"/>
</dbReference>
<dbReference type="InterPro" id="IPR006139">
    <property type="entry name" value="D-isomer_2_OHA_DH_cat_dom"/>
</dbReference>
<dbReference type="InterPro" id="IPR029753">
    <property type="entry name" value="D-isomer_DH_CS"/>
</dbReference>
<dbReference type="InterPro" id="IPR029752">
    <property type="entry name" value="D-isomer_DH_CS1"/>
</dbReference>
<dbReference type="InterPro" id="IPR006140">
    <property type="entry name" value="D-isomer_DH_NAD-bd"/>
</dbReference>
<dbReference type="InterPro" id="IPR036291">
    <property type="entry name" value="NAD(P)-bd_dom_sf"/>
</dbReference>
<dbReference type="PANTHER" id="PTHR10996:SF178">
    <property type="entry name" value="2-HYDROXYACID DEHYDROGENASE YGL185C-RELATED"/>
    <property type="match status" value="1"/>
</dbReference>
<dbReference type="PANTHER" id="PTHR10996">
    <property type="entry name" value="2-HYDROXYACID DEHYDROGENASE-RELATED"/>
    <property type="match status" value="1"/>
</dbReference>
<dbReference type="Pfam" id="PF00389">
    <property type="entry name" value="2-Hacid_dh"/>
    <property type="match status" value="1"/>
</dbReference>
<dbReference type="Pfam" id="PF02826">
    <property type="entry name" value="2-Hacid_dh_C"/>
    <property type="match status" value="1"/>
</dbReference>
<dbReference type="SUPFAM" id="SSF52283">
    <property type="entry name" value="Formate/glycerate dehydrogenase catalytic domain-like"/>
    <property type="match status" value="1"/>
</dbReference>
<dbReference type="SUPFAM" id="SSF51735">
    <property type="entry name" value="NAD(P)-binding Rossmann-fold domains"/>
    <property type="match status" value="1"/>
</dbReference>
<dbReference type="PROSITE" id="PS00065">
    <property type="entry name" value="D_2_HYDROXYACID_DH_1"/>
    <property type="match status" value="1"/>
</dbReference>
<dbReference type="PROSITE" id="PS00670">
    <property type="entry name" value="D_2_HYDROXYACID_DH_2"/>
    <property type="match status" value="1"/>
</dbReference>
<dbReference type="PROSITE" id="PS00671">
    <property type="entry name" value="D_2_HYDROXYACID_DH_3"/>
    <property type="match status" value="1"/>
</dbReference>
<sequence length="322" mass="35115">MSKKKILITWPLPEAAMARARESYDVIAHGDDPKITIDEMIETAKSVDALLITLNEKCRKEVIDRIPENIKCISTYSIGFDHIDLDACKARGIKVGNAPHGVTVATAEIAMLLLLGSARRAGEGEKMIRTRSWPGWEPLELVGEKLDNKTLGIYGFGSIGQALAKRAQGFDMDIDYFDTHRASSSDEASYQATFHDSLDSLLSVSQFFSLNAPSTPETRYFFNKATIKSLPQGAIVVNTARGDLVDNELVVAALEAGRLAYAGFDVFAGEPNINEGYYDLPNTFLFPHIGSAATQAREDMAHQANDLIDALFGGADMSYALA</sequence>
<protein>
    <recommendedName>
        <fullName>Glycerate dehydrogenase</fullName>
        <shortName>GDH</shortName>
        <ecNumber>1.1.1.29</ecNumber>
    </recommendedName>
    <alternativeName>
        <fullName>Glyoxylate reductase</fullName>
    </alternativeName>
    <alternativeName>
        <fullName>Hydroxypyruvate dehydrogenase</fullName>
    </alternativeName>
    <alternativeName>
        <fullName>NADH-dependent hydroxypyruvate reductase</fullName>
        <shortName>HPR</shortName>
    </alternativeName>
</protein>
<comment type="function">
    <text>Active on hydroxypyruvate and glyoxylate.</text>
</comment>
<comment type="catalytic activity">
    <reaction>
        <text>(R)-glycerate + NAD(+) = 3-hydroxypyruvate + NADH + H(+)</text>
        <dbReference type="Rhea" id="RHEA:17905"/>
        <dbReference type="ChEBI" id="CHEBI:15378"/>
        <dbReference type="ChEBI" id="CHEBI:16659"/>
        <dbReference type="ChEBI" id="CHEBI:17180"/>
        <dbReference type="ChEBI" id="CHEBI:57540"/>
        <dbReference type="ChEBI" id="CHEBI:57945"/>
        <dbReference type="EC" id="1.1.1.29"/>
    </reaction>
</comment>
<comment type="biophysicochemical properties">
    <phDependence>
        <text>Optimum pH is 6.8.</text>
    </phDependence>
    <temperatureDependence>
        <text>Optimum temperature is 45 degrees Celsius.</text>
    </temperatureDependence>
</comment>
<comment type="pathway">
    <text>One-carbon metabolism; formaldehyde assimilation via serine pathway.</text>
</comment>
<comment type="subunit">
    <text>Homodimer.</text>
</comment>
<comment type="induction">
    <text>By methanol.</text>
</comment>
<comment type="similarity">
    <text evidence="2">Belongs to the D-isomer specific 2-hydroxyacid dehydrogenase family.</text>
</comment>
<evidence type="ECO:0000250" key="1"/>
<evidence type="ECO:0000305" key="2"/>
<evidence type="ECO:0007829" key="3">
    <source>
        <dbReference type="PDB" id="1GDH"/>
    </source>
</evidence>
<organism>
    <name type="scientific">Hyphomicrobium methylovorum</name>
    <dbReference type="NCBI Taxonomy" id="84"/>
    <lineage>
        <taxon>Bacteria</taxon>
        <taxon>Pseudomonadati</taxon>
        <taxon>Pseudomonadota</taxon>
        <taxon>Alphaproteobacteria</taxon>
        <taxon>Hyphomicrobiales</taxon>
        <taxon>Hyphomicrobiaceae</taxon>
        <taxon>Hyphomicrobium</taxon>
    </lineage>
</organism>
<accession>P36234</accession>
<reference key="1">
    <citation type="journal article" date="1994" name="J. Mol. Biol.">
        <title>Crystal structure of a NAD-dependent D-glycerate dehydrogenase at 2.4-A resolution.</title>
        <authorList>
            <person name="Goldberg J.D."/>
            <person name="Yoshida T."/>
            <person name="Brick P."/>
        </authorList>
    </citation>
    <scope>X-RAY CRYSTALLOGRAPHY (2.4 ANGSTROMS)</scope>
</reference>
<reference key="2">
    <citation type="journal article" date="1990" name="Eur. J. Biochem.">
        <title>Purification and characterization of hydroxypyruvate reductase from a serine-producing methylotroph, Hyphomicrobium methylovorum GM2.</title>
        <authorList>
            <person name="Izumi Y."/>
            <person name="Yoshida T."/>
            <person name="Kanzaki H."/>
            <person name="Toki S."/>
            <person name="Miyazaki S.S."/>
            <person name="Yamada H."/>
        </authorList>
    </citation>
    <scope>CHARACTERIZATION</scope>
    <source>
        <strain>KM146 / GM2</strain>
    </source>
</reference>
<name>DHGY_HYPME</name>
<keyword id="KW-0002">3D-structure</keyword>
<keyword id="KW-0520">NAD</keyword>
<keyword id="KW-0560">Oxidoreductase</keyword>